<name>HDRB1_METMP</name>
<evidence type="ECO:0000269" key="1">
    <source>
    </source>
</evidence>
<evidence type="ECO:0000269" key="2">
    <source>
    </source>
</evidence>
<evidence type="ECO:0000303" key="3">
    <source>
    </source>
</evidence>
<evidence type="ECO:0000305" key="4"/>
<evidence type="ECO:0000312" key="5">
    <source>
        <dbReference type="EMBL" id="CAF30711.1"/>
    </source>
</evidence>
<gene>
    <name evidence="3" type="primary">hdrB1</name>
    <name evidence="5" type="ordered locus">MMP1155</name>
</gene>
<dbReference type="EC" id="1.8.98.5" evidence="2"/>
<dbReference type="EC" id="1.8.98.6" evidence="1 2"/>
<dbReference type="EMBL" id="BX950229">
    <property type="protein sequence ID" value="CAF30711.1"/>
    <property type="molecule type" value="Genomic_DNA"/>
</dbReference>
<dbReference type="RefSeq" id="WP_011171099.1">
    <property type="nucleotide sequence ID" value="NC_005791.1"/>
</dbReference>
<dbReference type="SMR" id="Q6LY38"/>
<dbReference type="STRING" id="267377.MMP1155"/>
<dbReference type="EnsemblBacteria" id="CAF30711">
    <property type="protein sequence ID" value="CAF30711"/>
    <property type="gene ID" value="MMP1155"/>
</dbReference>
<dbReference type="GeneID" id="10982733"/>
<dbReference type="GeneID" id="2761280"/>
<dbReference type="KEGG" id="mmp:MMP1155"/>
<dbReference type="PATRIC" id="fig|267377.15.peg.1188"/>
<dbReference type="eggNOG" id="arCOG00338">
    <property type="taxonomic scope" value="Archaea"/>
</dbReference>
<dbReference type="HOGENOM" id="CLU_052147_1_0_2"/>
<dbReference type="OrthoDB" id="144689at2157"/>
<dbReference type="BioCyc" id="MetaCyc:MONOMER-20166"/>
<dbReference type="UniPathway" id="UPA00647">
    <property type="reaction ID" value="UER00700"/>
</dbReference>
<dbReference type="Proteomes" id="UP000000590">
    <property type="component" value="Chromosome"/>
</dbReference>
<dbReference type="GO" id="GO:0051912">
    <property type="term" value="F:CoB--CoM heterodisulfide reductase activity"/>
    <property type="evidence" value="ECO:0007669"/>
    <property type="project" value="InterPro"/>
</dbReference>
<dbReference type="GO" id="GO:0015948">
    <property type="term" value="P:methanogenesis"/>
    <property type="evidence" value="ECO:0007669"/>
    <property type="project" value="UniProtKB-KW"/>
</dbReference>
<dbReference type="Gene3D" id="1.20.1050.140">
    <property type="match status" value="1"/>
</dbReference>
<dbReference type="Gene3D" id="3.40.50.11810">
    <property type="match status" value="1"/>
</dbReference>
<dbReference type="InterPro" id="IPR017678">
    <property type="entry name" value="CoB/CoM_hetero-S_Rdtase_bsu"/>
</dbReference>
<dbReference type="InterPro" id="IPR004017">
    <property type="entry name" value="Cys_rich_dom"/>
</dbReference>
<dbReference type="InterPro" id="IPR051278">
    <property type="entry name" value="HdrB/HdrD_reductase"/>
</dbReference>
<dbReference type="NCBIfam" id="TIGR03288">
    <property type="entry name" value="CoB_CoM_SS_B"/>
    <property type="match status" value="1"/>
</dbReference>
<dbReference type="PANTHER" id="PTHR42947">
    <property type="entry name" value="COB--COM HETERODISULFIDE REDUCTASE SUBUNIT B 1"/>
    <property type="match status" value="1"/>
</dbReference>
<dbReference type="PANTHER" id="PTHR42947:SF1">
    <property type="entry name" value="COB--COM HETERODISULFIDE REDUCTASE SUBUNIT B 1"/>
    <property type="match status" value="1"/>
</dbReference>
<dbReference type="Pfam" id="PF02754">
    <property type="entry name" value="CCG"/>
    <property type="match status" value="2"/>
</dbReference>
<feature type="chain" id="PRO_0000443936" description="H(2)/formate:CoB-CoM heterodisulfide,ferredoxin reductase subunit B1">
    <location>
        <begin position="1"/>
        <end position="301"/>
    </location>
</feature>
<reference key="1">
    <citation type="journal article" date="2004" name="J. Bacteriol.">
        <title>Complete genome sequence of the genetically tractable hydrogenotrophic methanogen Methanococcus maripaludis.</title>
        <authorList>
            <person name="Hendrickson E.L."/>
            <person name="Kaul R."/>
            <person name="Zhou Y."/>
            <person name="Bovee D."/>
            <person name="Chapman P."/>
            <person name="Chung J."/>
            <person name="Conway de Macario E."/>
            <person name="Dodsworth J.A."/>
            <person name="Gillett W."/>
            <person name="Graham D.E."/>
            <person name="Hackett M."/>
            <person name="Haydock A.K."/>
            <person name="Kang A."/>
            <person name="Land M.L."/>
            <person name="Levy R."/>
            <person name="Lie T.J."/>
            <person name="Major T.A."/>
            <person name="Moore B.C."/>
            <person name="Porat I."/>
            <person name="Palmeiri A."/>
            <person name="Rouse G."/>
            <person name="Saenphimmachak C."/>
            <person name="Soell D."/>
            <person name="Van Dien S."/>
            <person name="Wang T."/>
            <person name="Whitman W.B."/>
            <person name="Xia Q."/>
            <person name="Zhang Y."/>
            <person name="Larimer F.W."/>
            <person name="Olson M.V."/>
            <person name="Leigh J.A."/>
        </authorList>
    </citation>
    <scope>NUCLEOTIDE SEQUENCE [LARGE SCALE GENOMIC DNA]</scope>
    <source>
        <strain>DSM 14266 / JCM 13030 / NBRC 101832 / S2 / LL</strain>
    </source>
</reference>
<reference key="2">
    <citation type="journal article" date="2010" name="Proc. Natl. Acad. Sci. U.S.A.">
        <title>Protein complexing in a methanogen suggests electron bifurcation and electron delivery from formate to heterodisulfide reductase.</title>
        <authorList>
            <person name="Costa K.C."/>
            <person name="Wong P.M."/>
            <person name="Wang T."/>
            <person name="Lie T.J."/>
            <person name="Dodsworth J.A."/>
            <person name="Swanson I."/>
            <person name="Burn J.A."/>
            <person name="Hackett M."/>
            <person name="Leigh J.A."/>
        </authorList>
    </citation>
    <scope>FUNCTION</scope>
    <scope>CATALYTIC ACTIVITY</scope>
    <scope>SUBUNIT</scope>
    <source>
        <strain>DSM 14266 / JCM 13030 / NBRC 101832 / S2 / LL</strain>
    </source>
</reference>
<reference key="3">
    <citation type="journal article" date="2013" name="J. Bacteriol.">
        <title>VhuD facilitates electron flow from H2 or formate to heterodisulfide reductase in Methanococcus maripaludis.</title>
        <authorList>
            <person name="Costa K.C."/>
            <person name="Lie T.J."/>
            <person name="Xia Q."/>
            <person name="Leigh J.A."/>
        </authorList>
    </citation>
    <scope>FUNCTION</scope>
    <scope>CATALYTIC ACTIVITY</scope>
    <scope>SUBUNIT</scope>
    <source>
        <strain>DSM 14266 / JCM 13030 / NBRC 101832 / S2 / LL</strain>
    </source>
</reference>
<keyword id="KW-0484">Methanogenesis</keyword>
<keyword id="KW-0560">Oxidoreductase</keyword>
<keyword id="KW-1185">Reference proteome</keyword>
<sequence length="301" mass="33510">MSETDFEYMFFLGCIAPNRYPGIESATYKALDKLGIQLHPFEQASCCPAPGVFGSFDLMTWLTIAARNIVMAEQADLDILTICNGCYGSLFEANHILQDNENARNKVNEVLSKHGLEYTGKSRVRHLTEVLYFDYGTEKIAERVERPLDINVAVHYGCHYLKPTDVKHIESSEVPKSLDGLVEAIGAKSIYYKDKNMCCGAGGGVRARNPEVALEMAETKVKNIIAAGGDCVTEVCPFCHLQFDRGQIEMKETFGREYKLPVIHYAQLLGMAMGMTPKEVALDLHFIPADPLLEKLGINME</sequence>
<accession>Q6LY38</accession>
<protein>
    <recommendedName>
        <fullName evidence="4">H(2)/formate:CoB-CoM heterodisulfide,ferredoxin reductase subunit B1</fullName>
        <ecNumber evidence="2">1.8.98.5</ecNumber>
        <ecNumber evidence="1 2">1.8.98.6</ecNumber>
    </recommendedName>
    <alternativeName>
        <fullName evidence="4">CoB--CoM heterodisulfide reductase subunit B1</fullName>
    </alternativeName>
</protein>
<organism>
    <name type="scientific">Methanococcus maripaludis (strain DSM 14266 / JCM 13030 / NBRC 101832 / S2 / LL)</name>
    <dbReference type="NCBI Taxonomy" id="267377"/>
    <lineage>
        <taxon>Archaea</taxon>
        <taxon>Methanobacteriati</taxon>
        <taxon>Methanobacteriota</taxon>
        <taxon>Methanomada group</taxon>
        <taxon>Methanococci</taxon>
        <taxon>Methanococcales</taxon>
        <taxon>Methanococcaceae</taxon>
        <taxon>Methanococcus</taxon>
    </lineage>
</organism>
<proteinExistence type="evidence at protein level"/>
<comment type="function">
    <text evidence="1 2">Part of a complex that catalyzes the reversible reduction of CoM-S-S-CoB to the thiol-coenzymes H-S-CoM (coenzyme M) and H-S-CoB (coenzyme B).</text>
</comment>
<comment type="catalytic activity">
    <reaction evidence="2">
        <text>coenzyme B + coenzyme M + 2 reduced [2Fe-2S]-[ferredoxin] + 2 H(+) = coenzyme M-coenzyme B heterodisulfide + 2 H2 + 2 oxidized [2Fe-2S]-[ferredoxin]</text>
        <dbReference type="Rhea" id="RHEA:55748"/>
        <dbReference type="Rhea" id="RHEA-COMP:10000"/>
        <dbReference type="Rhea" id="RHEA-COMP:10001"/>
        <dbReference type="ChEBI" id="CHEBI:15378"/>
        <dbReference type="ChEBI" id="CHEBI:18276"/>
        <dbReference type="ChEBI" id="CHEBI:33737"/>
        <dbReference type="ChEBI" id="CHEBI:33738"/>
        <dbReference type="ChEBI" id="CHEBI:58319"/>
        <dbReference type="ChEBI" id="CHEBI:58411"/>
        <dbReference type="ChEBI" id="CHEBI:58596"/>
        <dbReference type="EC" id="1.8.98.5"/>
    </reaction>
</comment>
<comment type="catalytic activity">
    <reaction evidence="1 2">
        <text>coenzyme B + coenzyme M + 2 reduced [2Fe-2S]-[ferredoxin] + 2 CO2 = coenzyme M-coenzyme B heterodisulfide + 2 formate + 2 oxidized [2Fe-2S]-[ferredoxin]</text>
        <dbReference type="Rhea" id="RHEA:55752"/>
        <dbReference type="Rhea" id="RHEA-COMP:10000"/>
        <dbReference type="Rhea" id="RHEA-COMP:10001"/>
        <dbReference type="ChEBI" id="CHEBI:15740"/>
        <dbReference type="ChEBI" id="CHEBI:16526"/>
        <dbReference type="ChEBI" id="CHEBI:33737"/>
        <dbReference type="ChEBI" id="CHEBI:33738"/>
        <dbReference type="ChEBI" id="CHEBI:58319"/>
        <dbReference type="ChEBI" id="CHEBI:58411"/>
        <dbReference type="ChEBI" id="CHEBI:58596"/>
        <dbReference type="EC" id="1.8.98.6"/>
    </reaction>
</comment>
<comment type="pathway">
    <text evidence="4">Cofactor metabolism; coenzyme M-coenzyme B heterodisulfide reduction; coenzyme B and coenzyme M from coenzyme M-coenzyme B heterodisulfide: step 1/1.</text>
</comment>
<comment type="subunit">
    <text evidence="1 2">The heterodisulfide reductase is composed of three subunits; HdrA, HdrB and HdrC. B1 and B2 subunits are interchangeable, as are the C1 and C2 subunits. The heterodisulfide reductase forms a supercomplex with formylmethanofuran dehydrogenase (Fwd), F(420)-non-reducing hydrogenase (Vhu) and formate dehydrogenase (Fdh).</text>
</comment>
<comment type="similarity">
    <text evidence="4">Belongs to the HdrB family.</text>
</comment>